<evidence type="ECO:0000255" key="1">
    <source>
        <dbReference type="HAMAP-Rule" id="MF_01310"/>
    </source>
</evidence>
<evidence type="ECO:0000305" key="2"/>
<dbReference type="EMBL" id="EU262891">
    <property type="protein sequence ID" value="ABX10154.1"/>
    <property type="molecule type" value="Genomic_DNA"/>
</dbReference>
<dbReference type="RefSeq" id="YP_001687484.1">
    <property type="nucleotide sequence ID" value="NC_010362.1"/>
</dbReference>
<dbReference type="SMR" id="B0Z5G1"/>
<dbReference type="GeneID" id="5955389"/>
<dbReference type="GO" id="GO:0009507">
    <property type="term" value="C:chloroplast"/>
    <property type="evidence" value="ECO:0007669"/>
    <property type="project" value="UniProtKB-SubCell"/>
</dbReference>
<dbReference type="GO" id="GO:1990904">
    <property type="term" value="C:ribonucleoprotein complex"/>
    <property type="evidence" value="ECO:0007669"/>
    <property type="project" value="UniProtKB-KW"/>
</dbReference>
<dbReference type="GO" id="GO:0005840">
    <property type="term" value="C:ribosome"/>
    <property type="evidence" value="ECO:0007669"/>
    <property type="project" value="UniProtKB-KW"/>
</dbReference>
<dbReference type="GO" id="GO:0019843">
    <property type="term" value="F:rRNA binding"/>
    <property type="evidence" value="ECO:0007669"/>
    <property type="project" value="UniProtKB-UniRule"/>
</dbReference>
<dbReference type="GO" id="GO:0003735">
    <property type="term" value="F:structural constituent of ribosome"/>
    <property type="evidence" value="ECO:0007669"/>
    <property type="project" value="InterPro"/>
</dbReference>
<dbReference type="GO" id="GO:0006412">
    <property type="term" value="P:translation"/>
    <property type="evidence" value="ECO:0007669"/>
    <property type="project" value="UniProtKB-UniRule"/>
</dbReference>
<dbReference type="FunFam" id="3.30.420.80:FF:000003">
    <property type="entry name" value="30S ribosomal protein S11, chloroplastic"/>
    <property type="match status" value="1"/>
</dbReference>
<dbReference type="Gene3D" id="3.30.420.80">
    <property type="entry name" value="Ribosomal protein S11"/>
    <property type="match status" value="1"/>
</dbReference>
<dbReference type="HAMAP" id="MF_01310">
    <property type="entry name" value="Ribosomal_uS11"/>
    <property type="match status" value="1"/>
</dbReference>
<dbReference type="InterPro" id="IPR001971">
    <property type="entry name" value="Ribosomal_uS11"/>
</dbReference>
<dbReference type="InterPro" id="IPR019981">
    <property type="entry name" value="Ribosomal_uS11_bac-type"/>
</dbReference>
<dbReference type="InterPro" id="IPR018102">
    <property type="entry name" value="Ribosomal_uS11_CS"/>
</dbReference>
<dbReference type="InterPro" id="IPR036967">
    <property type="entry name" value="Ribosomal_uS11_sf"/>
</dbReference>
<dbReference type="NCBIfam" id="NF003698">
    <property type="entry name" value="PRK05309.1"/>
    <property type="match status" value="1"/>
</dbReference>
<dbReference type="NCBIfam" id="TIGR03632">
    <property type="entry name" value="uS11_bact"/>
    <property type="match status" value="1"/>
</dbReference>
<dbReference type="PANTHER" id="PTHR11759">
    <property type="entry name" value="40S RIBOSOMAL PROTEIN S14/30S RIBOSOMAL PROTEIN S11"/>
    <property type="match status" value="1"/>
</dbReference>
<dbReference type="Pfam" id="PF00411">
    <property type="entry name" value="Ribosomal_S11"/>
    <property type="match status" value="1"/>
</dbReference>
<dbReference type="PIRSF" id="PIRSF002131">
    <property type="entry name" value="Ribosomal_S11"/>
    <property type="match status" value="1"/>
</dbReference>
<dbReference type="SUPFAM" id="SSF53137">
    <property type="entry name" value="Translational machinery components"/>
    <property type="match status" value="1"/>
</dbReference>
<dbReference type="PROSITE" id="PS00054">
    <property type="entry name" value="RIBOSOMAL_S11"/>
    <property type="match status" value="1"/>
</dbReference>
<sequence>MAKSIPSAGLRLRLRLRRNARRRSRKSTRKIPKGVIHVQASFHNTIVTVTDVRGRVISWSSAGTCGFKSTRKGTPFAAQTAAGDAIRPVVDQGMQRAEVRIKGPGLGRDAALRAIRRSGIRLSCIRDVTPLPHNGCRPPKKRRV</sequence>
<reference key="1">
    <citation type="journal article" date="2008" name="Nucleic Acids Res.">
        <title>The complete nucleotide sequences of the five genetically distinct plastid genomes of Oenothera, subsection Oenothera: I. Sequence evaluation and plastome evolution.</title>
        <authorList>
            <person name="Greiner S."/>
            <person name="Wang X."/>
            <person name="Rauwolf U."/>
            <person name="Silber M.V."/>
            <person name="Mayer K."/>
            <person name="Meurer J."/>
            <person name="Haberer G."/>
            <person name="Herrmann R.G."/>
        </authorList>
    </citation>
    <scope>NUCLEOTIDE SEQUENCE [LARGE SCALE GENOMIC DNA]</scope>
    <source>
        <strain>cv. Atrovirens</strain>
    </source>
</reference>
<accession>B0Z5G1</accession>
<proteinExistence type="inferred from homology"/>
<feature type="chain" id="PRO_0000364221" description="Small ribosomal subunit protein uS11c">
    <location>
        <begin position="1"/>
        <end position="144"/>
    </location>
</feature>
<comment type="subunit">
    <text evidence="1">Part of the 30S ribosomal subunit.</text>
</comment>
<comment type="subcellular location">
    <subcellularLocation>
        <location>Plastid</location>
        <location>Chloroplast</location>
    </subcellularLocation>
</comment>
<comment type="similarity">
    <text evidence="1">Belongs to the universal ribosomal protein uS11 family.</text>
</comment>
<geneLocation type="chloroplast"/>
<name>RR11_OENPA</name>
<keyword id="KW-0150">Chloroplast</keyword>
<keyword id="KW-0934">Plastid</keyword>
<keyword id="KW-0687">Ribonucleoprotein</keyword>
<keyword id="KW-0689">Ribosomal protein</keyword>
<keyword id="KW-0694">RNA-binding</keyword>
<keyword id="KW-0699">rRNA-binding</keyword>
<gene>
    <name evidence="1" type="primary">rps11</name>
</gene>
<protein>
    <recommendedName>
        <fullName evidence="1">Small ribosomal subunit protein uS11c</fullName>
    </recommendedName>
    <alternativeName>
        <fullName evidence="2">30S ribosomal protein S11, chloroplastic</fullName>
    </alternativeName>
</protein>
<organism>
    <name type="scientific">Oenothera parviflora</name>
    <name type="common">Small-flowered evening primrose</name>
    <name type="synonym">Oenothera cruciata</name>
    <dbReference type="NCBI Taxonomy" id="482429"/>
    <lineage>
        <taxon>Eukaryota</taxon>
        <taxon>Viridiplantae</taxon>
        <taxon>Streptophyta</taxon>
        <taxon>Embryophyta</taxon>
        <taxon>Tracheophyta</taxon>
        <taxon>Spermatophyta</taxon>
        <taxon>Magnoliopsida</taxon>
        <taxon>eudicotyledons</taxon>
        <taxon>Gunneridae</taxon>
        <taxon>Pentapetalae</taxon>
        <taxon>rosids</taxon>
        <taxon>malvids</taxon>
        <taxon>Myrtales</taxon>
        <taxon>Onagraceae</taxon>
        <taxon>Onagroideae</taxon>
        <taxon>Onagreae</taxon>
        <taxon>Oenothera</taxon>
    </lineage>
</organism>